<accession>Q2NUK1</accession>
<feature type="chain" id="PRO_0000341175" description="D-alanine--D-alanine ligase">
    <location>
        <begin position="1"/>
        <end position="366"/>
    </location>
</feature>
<feature type="domain" description="ATP-grasp" evidence="2">
    <location>
        <begin position="150"/>
        <end position="353"/>
    </location>
</feature>
<feature type="binding site" evidence="2">
    <location>
        <begin position="180"/>
        <end position="235"/>
    </location>
    <ligand>
        <name>ATP</name>
        <dbReference type="ChEBI" id="CHEBI:30616"/>
    </ligand>
</feature>
<feature type="binding site" evidence="2">
    <location>
        <position position="307"/>
    </location>
    <ligand>
        <name>Mg(2+)</name>
        <dbReference type="ChEBI" id="CHEBI:18420"/>
        <label>1</label>
    </ligand>
</feature>
<feature type="binding site" evidence="2">
    <location>
        <position position="320"/>
    </location>
    <ligand>
        <name>Mg(2+)</name>
        <dbReference type="ChEBI" id="CHEBI:18420"/>
        <label>1</label>
    </ligand>
</feature>
<feature type="binding site" evidence="2">
    <location>
        <position position="320"/>
    </location>
    <ligand>
        <name>Mg(2+)</name>
        <dbReference type="ChEBI" id="CHEBI:18420"/>
        <label>2</label>
    </ligand>
</feature>
<feature type="binding site" evidence="2">
    <location>
        <position position="322"/>
    </location>
    <ligand>
        <name>Mg(2+)</name>
        <dbReference type="ChEBI" id="CHEBI:18420"/>
        <label>2</label>
    </ligand>
</feature>
<proteinExistence type="inferred from homology"/>
<comment type="function">
    <text evidence="2">Cell wall formation.</text>
</comment>
<comment type="catalytic activity">
    <reaction evidence="2">
        <text>2 D-alanine + ATP = D-alanyl-D-alanine + ADP + phosphate + H(+)</text>
        <dbReference type="Rhea" id="RHEA:11224"/>
        <dbReference type="ChEBI" id="CHEBI:15378"/>
        <dbReference type="ChEBI" id="CHEBI:30616"/>
        <dbReference type="ChEBI" id="CHEBI:43474"/>
        <dbReference type="ChEBI" id="CHEBI:57416"/>
        <dbReference type="ChEBI" id="CHEBI:57822"/>
        <dbReference type="ChEBI" id="CHEBI:456216"/>
        <dbReference type="EC" id="6.3.2.4"/>
    </reaction>
</comment>
<comment type="cofactor">
    <cofactor evidence="1">
        <name>Mg(2+)</name>
        <dbReference type="ChEBI" id="CHEBI:18420"/>
    </cofactor>
    <cofactor evidence="1">
        <name>Mn(2+)</name>
        <dbReference type="ChEBI" id="CHEBI:29035"/>
    </cofactor>
    <text evidence="1">Binds 2 magnesium or manganese ions per subunit.</text>
</comment>
<comment type="pathway">
    <text evidence="2">Cell wall biogenesis; peptidoglycan biosynthesis.</text>
</comment>
<comment type="subcellular location">
    <subcellularLocation>
        <location evidence="2">Cytoplasm</location>
    </subcellularLocation>
</comment>
<comment type="similarity">
    <text evidence="2">Belongs to the D-alanine--D-alanine ligase family.</text>
</comment>
<dbReference type="EC" id="6.3.2.4" evidence="2"/>
<dbReference type="EMBL" id="AP008232">
    <property type="protein sequence ID" value="BAE74174.1"/>
    <property type="molecule type" value="Genomic_DNA"/>
</dbReference>
<dbReference type="RefSeq" id="WP_011410760.1">
    <property type="nucleotide sequence ID" value="NC_007712.1"/>
</dbReference>
<dbReference type="SMR" id="Q2NUK1"/>
<dbReference type="STRING" id="343509.SG0899"/>
<dbReference type="KEGG" id="sgl:SG0899"/>
<dbReference type="eggNOG" id="COG1181">
    <property type="taxonomic scope" value="Bacteria"/>
</dbReference>
<dbReference type="HOGENOM" id="CLU_039268_0_0_6"/>
<dbReference type="OrthoDB" id="9813261at2"/>
<dbReference type="BioCyc" id="SGLO343509:SGP1_RS07655-MONOMER"/>
<dbReference type="UniPathway" id="UPA00219"/>
<dbReference type="Proteomes" id="UP000001932">
    <property type="component" value="Chromosome"/>
</dbReference>
<dbReference type="GO" id="GO:0005829">
    <property type="term" value="C:cytosol"/>
    <property type="evidence" value="ECO:0007669"/>
    <property type="project" value="TreeGrafter"/>
</dbReference>
<dbReference type="GO" id="GO:0005524">
    <property type="term" value="F:ATP binding"/>
    <property type="evidence" value="ECO:0007669"/>
    <property type="project" value="UniProtKB-KW"/>
</dbReference>
<dbReference type="GO" id="GO:0008716">
    <property type="term" value="F:D-alanine-D-alanine ligase activity"/>
    <property type="evidence" value="ECO:0007669"/>
    <property type="project" value="UniProtKB-UniRule"/>
</dbReference>
<dbReference type="GO" id="GO:0046872">
    <property type="term" value="F:metal ion binding"/>
    <property type="evidence" value="ECO:0007669"/>
    <property type="project" value="UniProtKB-KW"/>
</dbReference>
<dbReference type="GO" id="GO:0071555">
    <property type="term" value="P:cell wall organization"/>
    <property type="evidence" value="ECO:0007669"/>
    <property type="project" value="UniProtKB-KW"/>
</dbReference>
<dbReference type="GO" id="GO:0009252">
    <property type="term" value="P:peptidoglycan biosynthetic process"/>
    <property type="evidence" value="ECO:0007669"/>
    <property type="project" value="UniProtKB-UniRule"/>
</dbReference>
<dbReference type="GO" id="GO:0008360">
    <property type="term" value="P:regulation of cell shape"/>
    <property type="evidence" value="ECO:0007669"/>
    <property type="project" value="UniProtKB-KW"/>
</dbReference>
<dbReference type="FunFam" id="3.30.1490.20:FF:000007">
    <property type="entry name" value="D-alanine--D-alanine ligase"/>
    <property type="match status" value="1"/>
</dbReference>
<dbReference type="FunFam" id="3.30.470.20:FF:000008">
    <property type="entry name" value="D-alanine--D-alanine ligase"/>
    <property type="match status" value="1"/>
</dbReference>
<dbReference type="Gene3D" id="3.40.50.20">
    <property type="match status" value="1"/>
</dbReference>
<dbReference type="Gene3D" id="3.30.1490.20">
    <property type="entry name" value="ATP-grasp fold, A domain"/>
    <property type="match status" value="1"/>
</dbReference>
<dbReference type="Gene3D" id="3.30.470.20">
    <property type="entry name" value="ATP-grasp fold, B domain"/>
    <property type="match status" value="1"/>
</dbReference>
<dbReference type="HAMAP" id="MF_00047">
    <property type="entry name" value="Dala_Dala_lig"/>
    <property type="match status" value="1"/>
</dbReference>
<dbReference type="InterPro" id="IPR011761">
    <property type="entry name" value="ATP-grasp"/>
</dbReference>
<dbReference type="InterPro" id="IPR013815">
    <property type="entry name" value="ATP_grasp_subdomain_1"/>
</dbReference>
<dbReference type="InterPro" id="IPR000291">
    <property type="entry name" value="D-Ala_lig_Van_CS"/>
</dbReference>
<dbReference type="InterPro" id="IPR005905">
    <property type="entry name" value="D_ala_D_ala"/>
</dbReference>
<dbReference type="InterPro" id="IPR011095">
    <property type="entry name" value="Dala_Dala_lig_C"/>
</dbReference>
<dbReference type="InterPro" id="IPR011127">
    <property type="entry name" value="Dala_Dala_lig_N"/>
</dbReference>
<dbReference type="InterPro" id="IPR016185">
    <property type="entry name" value="PreATP-grasp_dom_sf"/>
</dbReference>
<dbReference type="NCBIfam" id="TIGR01205">
    <property type="entry name" value="D_ala_D_alaTIGR"/>
    <property type="match status" value="1"/>
</dbReference>
<dbReference type="NCBIfam" id="NF002378">
    <property type="entry name" value="PRK01372.1"/>
    <property type="match status" value="1"/>
</dbReference>
<dbReference type="NCBIfam" id="NF002525">
    <property type="entry name" value="PRK01966.1-1"/>
    <property type="match status" value="1"/>
</dbReference>
<dbReference type="NCBIfam" id="NF002528">
    <property type="entry name" value="PRK01966.1-4"/>
    <property type="match status" value="1"/>
</dbReference>
<dbReference type="PANTHER" id="PTHR23132">
    <property type="entry name" value="D-ALANINE--D-ALANINE LIGASE"/>
    <property type="match status" value="1"/>
</dbReference>
<dbReference type="PANTHER" id="PTHR23132:SF25">
    <property type="entry name" value="D-ALANINE--D-ALANINE LIGASE A"/>
    <property type="match status" value="1"/>
</dbReference>
<dbReference type="Pfam" id="PF07478">
    <property type="entry name" value="Dala_Dala_lig_C"/>
    <property type="match status" value="1"/>
</dbReference>
<dbReference type="Pfam" id="PF01820">
    <property type="entry name" value="Dala_Dala_lig_N"/>
    <property type="match status" value="1"/>
</dbReference>
<dbReference type="PIRSF" id="PIRSF039102">
    <property type="entry name" value="Ddl/VanB"/>
    <property type="match status" value="1"/>
</dbReference>
<dbReference type="SUPFAM" id="SSF56059">
    <property type="entry name" value="Glutathione synthetase ATP-binding domain-like"/>
    <property type="match status" value="1"/>
</dbReference>
<dbReference type="SUPFAM" id="SSF52440">
    <property type="entry name" value="PreATP-grasp domain"/>
    <property type="match status" value="1"/>
</dbReference>
<dbReference type="PROSITE" id="PS50975">
    <property type="entry name" value="ATP_GRASP"/>
    <property type="match status" value="1"/>
</dbReference>
<dbReference type="PROSITE" id="PS00843">
    <property type="entry name" value="DALA_DALA_LIGASE_1"/>
    <property type="match status" value="1"/>
</dbReference>
<dbReference type="PROSITE" id="PS00844">
    <property type="entry name" value="DALA_DALA_LIGASE_2"/>
    <property type="match status" value="1"/>
</dbReference>
<name>DDL_SODGM</name>
<sequence>MEPRESGKQRVAVLFGGQSTEHEVSLRSSMNVIRAIDRQKYDLTLIGVDKHGRWTLCDEQDYLLNADNPAAIRLAPARCYLAVVPGQSGAQLIDAANGQPFPSIDVAFSVLHGASGEDGSVQGLLRVLNIPYAGPDVLGSAVCMDKDMTKRVLRDAGVPVTPSVTLLRTGDAAPDVDAIIGQLGLPLFIKPASQGSSVGVSKVTDRAGFAAALALAFRYDAKVLVEQGISGREIETAVLGNDSPEVSVCGEILANDEFYAYDTKYLKGAQAGLVIPAALPAPIADALRQMAREAYLALGCSVMARVDFFLTDQGQILLNEVNTLPGFTSISMYPKLWEASGLDYPALVDRLIVLARASARQNAEIR</sequence>
<evidence type="ECO:0000250" key="1"/>
<evidence type="ECO:0000255" key="2">
    <source>
        <dbReference type="HAMAP-Rule" id="MF_00047"/>
    </source>
</evidence>
<protein>
    <recommendedName>
        <fullName evidence="2">D-alanine--D-alanine ligase</fullName>
        <ecNumber evidence="2">6.3.2.4</ecNumber>
    </recommendedName>
    <alternativeName>
        <fullName evidence="2">D-Ala-D-Ala ligase</fullName>
    </alternativeName>
    <alternativeName>
        <fullName evidence="2">D-alanylalanine synthetase</fullName>
    </alternativeName>
</protein>
<gene>
    <name evidence="2" type="primary">ddl</name>
    <name type="ordered locus">SG0899</name>
</gene>
<reference key="1">
    <citation type="journal article" date="2006" name="Genome Res.">
        <title>Massive genome erosion and functional adaptations provide insights into the symbiotic lifestyle of Sodalis glossinidius in the tsetse host.</title>
        <authorList>
            <person name="Toh H."/>
            <person name="Weiss B.L."/>
            <person name="Perkin S.A.H."/>
            <person name="Yamashita A."/>
            <person name="Oshima K."/>
            <person name="Hattori M."/>
            <person name="Aksoy S."/>
        </authorList>
    </citation>
    <scope>NUCLEOTIDE SEQUENCE [LARGE SCALE GENOMIC DNA]</scope>
    <source>
        <strain>morsitans</strain>
    </source>
</reference>
<organism>
    <name type="scientific">Sodalis glossinidius (strain morsitans)</name>
    <dbReference type="NCBI Taxonomy" id="343509"/>
    <lineage>
        <taxon>Bacteria</taxon>
        <taxon>Pseudomonadati</taxon>
        <taxon>Pseudomonadota</taxon>
        <taxon>Gammaproteobacteria</taxon>
        <taxon>Enterobacterales</taxon>
        <taxon>Bruguierivoracaceae</taxon>
        <taxon>Sodalis</taxon>
    </lineage>
</organism>
<keyword id="KW-0067">ATP-binding</keyword>
<keyword id="KW-0133">Cell shape</keyword>
<keyword id="KW-0961">Cell wall biogenesis/degradation</keyword>
<keyword id="KW-0963">Cytoplasm</keyword>
<keyword id="KW-0436">Ligase</keyword>
<keyword id="KW-0460">Magnesium</keyword>
<keyword id="KW-0464">Manganese</keyword>
<keyword id="KW-0479">Metal-binding</keyword>
<keyword id="KW-0547">Nucleotide-binding</keyword>
<keyword id="KW-0573">Peptidoglycan synthesis</keyword>